<protein>
    <recommendedName>
        <fullName evidence="1">Histidine ammonia-lyase</fullName>
        <shortName evidence="1">Histidase</shortName>
        <ecNumber evidence="1">4.3.1.3</ecNumber>
    </recommendedName>
</protein>
<proteinExistence type="inferred from homology"/>
<evidence type="ECO:0000255" key="1">
    <source>
        <dbReference type="HAMAP-Rule" id="MF_00229"/>
    </source>
</evidence>
<dbReference type="EC" id="4.3.1.3" evidence="1"/>
<dbReference type="EMBL" id="CP000857">
    <property type="protein sequence ID" value="ACN44961.1"/>
    <property type="molecule type" value="Genomic_DNA"/>
</dbReference>
<dbReference type="RefSeq" id="WP_001095242.1">
    <property type="nucleotide sequence ID" value="NC_012125.1"/>
</dbReference>
<dbReference type="SMR" id="C0PWX9"/>
<dbReference type="KEGG" id="sei:SPC_0787"/>
<dbReference type="HOGENOM" id="CLU_014801_4_0_6"/>
<dbReference type="UniPathway" id="UPA00379">
    <property type="reaction ID" value="UER00549"/>
</dbReference>
<dbReference type="Proteomes" id="UP000001599">
    <property type="component" value="Chromosome"/>
</dbReference>
<dbReference type="GO" id="GO:0005737">
    <property type="term" value="C:cytoplasm"/>
    <property type="evidence" value="ECO:0007669"/>
    <property type="project" value="UniProtKB-SubCell"/>
</dbReference>
<dbReference type="GO" id="GO:0004397">
    <property type="term" value="F:histidine ammonia-lyase activity"/>
    <property type="evidence" value="ECO:0007669"/>
    <property type="project" value="UniProtKB-UniRule"/>
</dbReference>
<dbReference type="GO" id="GO:0019556">
    <property type="term" value="P:L-histidine catabolic process to glutamate and formamide"/>
    <property type="evidence" value="ECO:0007669"/>
    <property type="project" value="UniProtKB-UniPathway"/>
</dbReference>
<dbReference type="GO" id="GO:0019557">
    <property type="term" value="P:L-histidine catabolic process to glutamate and formate"/>
    <property type="evidence" value="ECO:0007669"/>
    <property type="project" value="UniProtKB-UniPathway"/>
</dbReference>
<dbReference type="CDD" id="cd00332">
    <property type="entry name" value="PAL-HAL"/>
    <property type="match status" value="1"/>
</dbReference>
<dbReference type="FunFam" id="1.10.275.10:FF:000005">
    <property type="entry name" value="Histidine ammonia-lyase"/>
    <property type="match status" value="1"/>
</dbReference>
<dbReference type="FunFam" id="1.20.200.10:FF:000003">
    <property type="entry name" value="Histidine ammonia-lyase"/>
    <property type="match status" value="1"/>
</dbReference>
<dbReference type="Gene3D" id="1.20.200.10">
    <property type="entry name" value="Fumarase/aspartase (Central domain)"/>
    <property type="match status" value="1"/>
</dbReference>
<dbReference type="Gene3D" id="1.10.275.10">
    <property type="entry name" value="Fumarase/aspartase (N-terminal domain)"/>
    <property type="match status" value="1"/>
</dbReference>
<dbReference type="HAMAP" id="MF_00229">
    <property type="entry name" value="His_ammonia_lyase"/>
    <property type="match status" value="1"/>
</dbReference>
<dbReference type="InterPro" id="IPR001106">
    <property type="entry name" value="Aromatic_Lyase"/>
</dbReference>
<dbReference type="InterPro" id="IPR024083">
    <property type="entry name" value="Fumarase/histidase_N"/>
</dbReference>
<dbReference type="InterPro" id="IPR005921">
    <property type="entry name" value="HutH"/>
</dbReference>
<dbReference type="InterPro" id="IPR008948">
    <property type="entry name" value="L-Aspartase-like"/>
</dbReference>
<dbReference type="InterPro" id="IPR022313">
    <property type="entry name" value="Phe/His_NH3-lyase_AS"/>
</dbReference>
<dbReference type="NCBIfam" id="TIGR01225">
    <property type="entry name" value="hutH"/>
    <property type="match status" value="1"/>
</dbReference>
<dbReference type="NCBIfam" id="NF006871">
    <property type="entry name" value="PRK09367.1"/>
    <property type="match status" value="1"/>
</dbReference>
<dbReference type="PANTHER" id="PTHR10362">
    <property type="entry name" value="HISTIDINE AMMONIA-LYASE"/>
    <property type="match status" value="1"/>
</dbReference>
<dbReference type="Pfam" id="PF00221">
    <property type="entry name" value="Lyase_aromatic"/>
    <property type="match status" value="1"/>
</dbReference>
<dbReference type="SUPFAM" id="SSF48557">
    <property type="entry name" value="L-aspartase-like"/>
    <property type="match status" value="1"/>
</dbReference>
<dbReference type="PROSITE" id="PS00488">
    <property type="entry name" value="PAL_HISTIDASE"/>
    <property type="match status" value="1"/>
</dbReference>
<feature type="chain" id="PRO_1000125097" description="Histidine ammonia-lyase">
    <location>
        <begin position="1"/>
        <end position="506"/>
    </location>
</feature>
<feature type="modified residue" description="2,3-didehydroalanine (Ser)" evidence="1">
    <location>
        <position position="144"/>
    </location>
</feature>
<feature type="cross-link" description="5-imidazolinone (Ala-Gly)" evidence="1">
    <location>
        <begin position="143"/>
        <end position="145"/>
    </location>
</feature>
<name>HUTH_SALPC</name>
<organism>
    <name type="scientific">Salmonella paratyphi C (strain RKS4594)</name>
    <dbReference type="NCBI Taxonomy" id="476213"/>
    <lineage>
        <taxon>Bacteria</taxon>
        <taxon>Pseudomonadati</taxon>
        <taxon>Pseudomonadota</taxon>
        <taxon>Gammaproteobacteria</taxon>
        <taxon>Enterobacterales</taxon>
        <taxon>Enterobacteriaceae</taxon>
        <taxon>Salmonella</taxon>
    </lineage>
</organism>
<comment type="catalytic activity">
    <reaction evidence="1">
        <text>L-histidine = trans-urocanate + NH4(+)</text>
        <dbReference type="Rhea" id="RHEA:21232"/>
        <dbReference type="ChEBI" id="CHEBI:17771"/>
        <dbReference type="ChEBI" id="CHEBI:28938"/>
        <dbReference type="ChEBI" id="CHEBI:57595"/>
        <dbReference type="EC" id="4.3.1.3"/>
    </reaction>
</comment>
<comment type="pathway">
    <text evidence="1">Amino-acid degradation; L-histidine degradation into L-glutamate; N-formimidoyl-L-glutamate from L-histidine: step 1/3.</text>
</comment>
<comment type="subcellular location">
    <subcellularLocation>
        <location evidence="1">Cytoplasm</location>
    </subcellularLocation>
</comment>
<comment type="PTM">
    <text evidence="1">Contains an active site 4-methylidene-imidazol-5-one (MIO), which is formed autocatalytically by cyclization and dehydration of residues Ala-Ser-Gly.</text>
</comment>
<comment type="similarity">
    <text evidence="1">Belongs to the PAL/histidase family.</text>
</comment>
<reference key="1">
    <citation type="journal article" date="2009" name="PLoS ONE">
        <title>Salmonella paratyphi C: genetic divergence from Salmonella choleraesuis and pathogenic convergence with Salmonella typhi.</title>
        <authorList>
            <person name="Liu W.-Q."/>
            <person name="Feng Y."/>
            <person name="Wang Y."/>
            <person name="Zou Q.-H."/>
            <person name="Chen F."/>
            <person name="Guo J.-T."/>
            <person name="Peng Y.-H."/>
            <person name="Jin Y."/>
            <person name="Li Y.-G."/>
            <person name="Hu S.-N."/>
            <person name="Johnston R.N."/>
            <person name="Liu G.-R."/>
            <person name="Liu S.-L."/>
        </authorList>
    </citation>
    <scope>NUCLEOTIDE SEQUENCE [LARGE SCALE GENOMIC DNA]</scope>
    <source>
        <strain>RKS4594</strain>
    </source>
</reference>
<keyword id="KW-0963">Cytoplasm</keyword>
<keyword id="KW-0369">Histidine metabolism</keyword>
<keyword id="KW-0456">Lyase</keyword>
<accession>C0PWX9</accession>
<sequence>MNTMTLTPGQLSLSQLYDVWRHPVQLRLDASAIDGINASVACVNDIVAEGRTAYGINTGFGLLAQTRIADEDLQNLQRSLVLSHAAGVGDPLDDAMVRLIMVLKINSLARGFSGIRLSVIEALIALVNAGVYPLIPAKGSVGASGDLAPLAHLSLTLLGEGKARWQGEWLPAQTALKKAGLEPVALAAKEGLALLNGTQASTAFALRGLFEAQELFASAVVCGALTTEAVLGSRRPFDARIHAARGQQGQIDVARLFRHLLTDTSAIAESHHHCHKVQDPYSLRCQPQVMGACLTQLRQTKEVLLAEANAVSDNPLVFADAGEVISGGNFHAEPVAMAADNLALAIAEIGALSERRIALMMDKHMSQLPPFLVKNGGVNSGFMIAQVTAAALASENKALAHPHSVDSLPTSANQEDHVSMAPAAGRRLWEMAANTRGIIAVEWLAACQGIDLREGLTSSPLLEQARQTLRERVAHYTQDRFFAPDIECATALLAQGALQRLVPDFM</sequence>
<gene>
    <name evidence="1" type="primary">hutH</name>
    <name type="ordered locus">SPC_0787</name>
</gene>